<organism>
    <name type="scientific">Xylella fastidiosa (strain Temecula1 / ATCC 700964)</name>
    <dbReference type="NCBI Taxonomy" id="183190"/>
    <lineage>
        <taxon>Bacteria</taxon>
        <taxon>Pseudomonadati</taxon>
        <taxon>Pseudomonadota</taxon>
        <taxon>Gammaproteobacteria</taxon>
        <taxon>Lysobacterales</taxon>
        <taxon>Lysobacteraceae</taxon>
        <taxon>Xylella</taxon>
    </lineage>
</organism>
<sequence>MNNKHPKNKAKSTTTPKTIALNKRARHEYHLIERHEAGLELQGWEVKAIRAGRANLGDGYAYVRDGEIFLIGAQITPLIQASTHVVANDRRTRKLLLHRHQIDTLIGRVQREGFTLVPTAMYWSKNRVKMEIALAKGKQAHDKRHAEKEREWQRDKQRIMRAHNRNA</sequence>
<comment type="function">
    <text evidence="1">Required for rescue of stalled ribosomes mediated by trans-translation. Binds to transfer-messenger RNA (tmRNA), required for stable association of tmRNA with ribosomes. tmRNA and SmpB together mimic tRNA shape, replacing the anticodon stem-loop with SmpB. tmRNA is encoded by the ssrA gene; the 2 termini fold to resemble tRNA(Ala) and it encodes a 'tag peptide', a short internal open reading frame. During trans-translation Ala-aminoacylated tmRNA acts like a tRNA, entering the A-site of stalled ribosomes, displacing the stalled mRNA. The ribosome then switches to translate the ORF on the tmRNA; the nascent peptide is terminated with the 'tag peptide' encoded by the tmRNA and targeted for degradation. The ribosome is freed to recommence translation, which seems to be the essential function of trans-translation.</text>
</comment>
<comment type="subcellular location">
    <subcellularLocation>
        <location evidence="1">Cytoplasm</location>
    </subcellularLocation>
    <text evidence="1">The tmRNA-SmpB complex associates with stalled 70S ribosomes.</text>
</comment>
<comment type="similarity">
    <text evidence="1">Belongs to the SmpB family.</text>
</comment>
<gene>
    <name evidence="1" type="primary">smpB</name>
    <name type="ordered locus">PD_1378</name>
</gene>
<feature type="chain" id="PRO_0000103075" description="SsrA-binding protein">
    <location>
        <begin position="1"/>
        <end position="167"/>
    </location>
</feature>
<feature type="region of interest" description="Disordered" evidence="2">
    <location>
        <begin position="139"/>
        <end position="167"/>
    </location>
</feature>
<feature type="compositionally biased region" description="Basic and acidic residues" evidence="2">
    <location>
        <begin position="144"/>
        <end position="158"/>
    </location>
</feature>
<dbReference type="EMBL" id="AE009442">
    <property type="protein sequence ID" value="AAO29225.1"/>
    <property type="molecule type" value="Genomic_DNA"/>
</dbReference>
<dbReference type="RefSeq" id="WP_004091039.1">
    <property type="nucleotide sequence ID" value="NC_004556.1"/>
</dbReference>
<dbReference type="SMR" id="Q87BS0"/>
<dbReference type="GeneID" id="93905195"/>
<dbReference type="KEGG" id="xft:PD_1378"/>
<dbReference type="HOGENOM" id="CLU_108953_3_0_6"/>
<dbReference type="Proteomes" id="UP000002516">
    <property type="component" value="Chromosome"/>
</dbReference>
<dbReference type="GO" id="GO:0005829">
    <property type="term" value="C:cytosol"/>
    <property type="evidence" value="ECO:0007669"/>
    <property type="project" value="TreeGrafter"/>
</dbReference>
<dbReference type="GO" id="GO:0003723">
    <property type="term" value="F:RNA binding"/>
    <property type="evidence" value="ECO:0007669"/>
    <property type="project" value="UniProtKB-UniRule"/>
</dbReference>
<dbReference type="GO" id="GO:0070929">
    <property type="term" value="P:trans-translation"/>
    <property type="evidence" value="ECO:0007669"/>
    <property type="project" value="UniProtKB-UniRule"/>
</dbReference>
<dbReference type="CDD" id="cd09294">
    <property type="entry name" value="SmpB"/>
    <property type="match status" value="1"/>
</dbReference>
<dbReference type="Gene3D" id="2.40.280.10">
    <property type="match status" value="1"/>
</dbReference>
<dbReference type="HAMAP" id="MF_00023">
    <property type="entry name" value="SmpB"/>
    <property type="match status" value="1"/>
</dbReference>
<dbReference type="InterPro" id="IPR023620">
    <property type="entry name" value="SmpB"/>
</dbReference>
<dbReference type="InterPro" id="IPR000037">
    <property type="entry name" value="SsrA-bd_prot"/>
</dbReference>
<dbReference type="InterPro" id="IPR020081">
    <property type="entry name" value="SsrA-bd_prot_CS"/>
</dbReference>
<dbReference type="NCBIfam" id="NF003843">
    <property type="entry name" value="PRK05422.1"/>
    <property type="match status" value="1"/>
</dbReference>
<dbReference type="NCBIfam" id="TIGR00086">
    <property type="entry name" value="smpB"/>
    <property type="match status" value="1"/>
</dbReference>
<dbReference type="PANTHER" id="PTHR30308:SF2">
    <property type="entry name" value="SSRA-BINDING PROTEIN"/>
    <property type="match status" value="1"/>
</dbReference>
<dbReference type="PANTHER" id="PTHR30308">
    <property type="entry name" value="TMRNA-BINDING COMPONENT OF TRANS-TRANSLATION TAGGING COMPLEX"/>
    <property type="match status" value="1"/>
</dbReference>
<dbReference type="Pfam" id="PF01668">
    <property type="entry name" value="SmpB"/>
    <property type="match status" value="1"/>
</dbReference>
<dbReference type="SUPFAM" id="SSF74982">
    <property type="entry name" value="Small protein B (SmpB)"/>
    <property type="match status" value="1"/>
</dbReference>
<dbReference type="PROSITE" id="PS01317">
    <property type="entry name" value="SSRP"/>
    <property type="match status" value="1"/>
</dbReference>
<proteinExistence type="inferred from homology"/>
<protein>
    <recommendedName>
        <fullName evidence="1">SsrA-binding protein</fullName>
    </recommendedName>
    <alternativeName>
        <fullName evidence="1">Small protein B</fullName>
    </alternativeName>
</protein>
<keyword id="KW-0963">Cytoplasm</keyword>
<keyword id="KW-1185">Reference proteome</keyword>
<keyword id="KW-0694">RNA-binding</keyword>
<accession>Q87BS0</accession>
<reference key="1">
    <citation type="journal article" date="2003" name="J. Bacteriol.">
        <title>Comparative analyses of the complete genome sequences of Pierce's disease and citrus variegated chlorosis strains of Xylella fastidiosa.</title>
        <authorList>
            <person name="Van Sluys M.A."/>
            <person name="de Oliveira M.C."/>
            <person name="Monteiro-Vitorello C.B."/>
            <person name="Miyaki C.Y."/>
            <person name="Furlan L.R."/>
            <person name="Camargo L.E.A."/>
            <person name="da Silva A.C.R."/>
            <person name="Moon D.H."/>
            <person name="Takita M.A."/>
            <person name="Lemos E.G.M."/>
            <person name="Machado M.A."/>
            <person name="Ferro M.I.T."/>
            <person name="da Silva F.R."/>
            <person name="Goldman M.H.S."/>
            <person name="Goldman G.H."/>
            <person name="Lemos M.V.F."/>
            <person name="El-Dorry H."/>
            <person name="Tsai S.M."/>
            <person name="Carrer H."/>
            <person name="Carraro D.M."/>
            <person name="de Oliveira R.C."/>
            <person name="Nunes L.R."/>
            <person name="Siqueira W.J."/>
            <person name="Coutinho L.L."/>
            <person name="Kimura E.T."/>
            <person name="Ferro E.S."/>
            <person name="Harakava R."/>
            <person name="Kuramae E.E."/>
            <person name="Marino C.L."/>
            <person name="Giglioti E."/>
            <person name="Abreu I.L."/>
            <person name="Alves L.M.C."/>
            <person name="do Amaral A.M."/>
            <person name="Baia G.S."/>
            <person name="Blanco S.R."/>
            <person name="Brito M.S."/>
            <person name="Cannavan F.S."/>
            <person name="Celestino A.V."/>
            <person name="da Cunha A.F."/>
            <person name="Fenille R.C."/>
            <person name="Ferro J.A."/>
            <person name="Formighieri E.F."/>
            <person name="Kishi L.T."/>
            <person name="Leoni S.G."/>
            <person name="Oliveira A.R."/>
            <person name="Rosa V.E. Jr."/>
            <person name="Sassaki F.T."/>
            <person name="Sena J.A.D."/>
            <person name="de Souza A.A."/>
            <person name="Truffi D."/>
            <person name="Tsukumo F."/>
            <person name="Yanai G.M."/>
            <person name="Zaros L.G."/>
            <person name="Civerolo E.L."/>
            <person name="Simpson A.J.G."/>
            <person name="Almeida N.F. Jr."/>
            <person name="Setubal J.C."/>
            <person name="Kitajima J.P."/>
        </authorList>
    </citation>
    <scope>NUCLEOTIDE SEQUENCE [LARGE SCALE GENOMIC DNA]</scope>
    <source>
        <strain>Temecula1 / ATCC 700964</strain>
    </source>
</reference>
<evidence type="ECO:0000255" key="1">
    <source>
        <dbReference type="HAMAP-Rule" id="MF_00023"/>
    </source>
</evidence>
<evidence type="ECO:0000256" key="2">
    <source>
        <dbReference type="SAM" id="MobiDB-lite"/>
    </source>
</evidence>
<name>SSRP_XYLFT</name>